<proteinExistence type="inferred from homology"/>
<name>RS16_AZOVD</name>
<accession>C1DDY7</accession>
<keyword id="KW-0687">Ribonucleoprotein</keyword>
<keyword id="KW-0689">Ribosomal protein</keyword>
<organism>
    <name type="scientific">Azotobacter vinelandii (strain DJ / ATCC BAA-1303)</name>
    <dbReference type="NCBI Taxonomy" id="322710"/>
    <lineage>
        <taxon>Bacteria</taxon>
        <taxon>Pseudomonadati</taxon>
        <taxon>Pseudomonadota</taxon>
        <taxon>Gammaproteobacteria</taxon>
        <taxon>Pseudomonadales</taxon>
        <taxon>Pseudomonadaceae</taxon>
        <taxon>Azotobacter</taxon>
    </lineage>
</organism>
<dbReference type="EMBL" id="CP001157">
    <property type="protein sequence ID" value="ACO80095.1"/>
    <property type="molecule type" value="Genomic_DNA"/>
</dbReference>
<dbReference type="RefSeq" id="WP_012702470.1">
    <property type="nucleotide sequence ID" value="NC_012560.1"/>
</dbReference>
<dbReference type="SMR" id="C1DDY7"/>
<dbReference type="STRING" id="322710.Avin_39560"/>
<dbReference type="EnsemblBacteria" id="ACO80095">
    <property type="protein sequence ID" value="ACO80095"/>
    <property type="gene ID" value="Avin_39560"/>
</dbReference>
<dbReference type="GeneID" id="88186911"/>
<dbReference type="KEGG" id="avn:Avin_39560"/>
<dbReference type="eggNOG" id="COG0228">
    <property type="taxonomic scope" value="Bacteria"/>
</dbReference>
<dbReference type="HOGENOM" id="CLU_100590_5_1_6"/>
<dbReference type="OrthoDB" id="9807878at2"/>
<dbReference type="Proteomes" id="UP000002424">
    <property type="component" value="Chromosome"/>
</dbReference>
<dbReference type="GO" id="GO:0005737">
    <property type="term" value="C:cytoplasm"/>
    <property type="evidence" value="ECO:0007669"/>
    <property type="project" value="UniProtKB-ARBA"/>
</dbReference>
<dbReference type="GO" id="GO:0015935">
    <property type="term" value="C:small ribosomal subunit"/>
    <property type="evidence" value="ECO:0007669"/>
    <property type="project" value="TreeGrafter"/>
</dbReference>
<dbReference type="GO" id="GO:0003735">
    <property type="term" value="F:structural constituent of ribosome"/>
    <property type="evidence" value="ECO:0007669"/>
    <property type="project" value="InterPro"/>
</dbReference>
<dbReference type="GO" id="GO:0006412">
    <property type="term" value="P:translation"/>
    <property type="evidence" value="ECO:0007669"/>
    <property type="project" value="UniProtKB-UniRule"/>
</dbReference>
<dbReference type="FunFam" id="3.30.1320.10:FF:000001">
    <property type="entry name" value="30S ribosomal protein S16"/>
    <property type="match status" value="1"/>
</dbReference>
<dbReference type="Gene3D" id="3.30.1320.10">
    <property type="match status" value="1"/>
</dbReference>
<dbReference type="HAMAP" id="MF_00385">
    <property type="entry name" value="Ribosomal_bS16"/>
    <property type="match status" value="1"/>
</dbReference>
<dbReference type="InterPro" id="IPR000307">
    <property type="entry name" value="Ribosomal_bS16"/>
</dbReference>
<dbReference type="InterPro" id="IPR023803">
    <property type="entry name" value="Ribosomal_bS16_dom_sf"/>
</dbReference>
<dbReference type="NCBIfam" id="TIGR00002">
    <property type="entry name" value="S16"/>
    <property type="match status" value="1"/>
</dbReference>
<dbReference type="PANTHER" id="PTHR12919">
    <property type="entry name" value="30S RIBOSOMAL PROTEIN S16"/>
    <property type="match status" value="1"/>
</dbReference>
<dbReference type="PANTHER" id="PTHR12919:SF20">
    <property type="entry name" value="SMALL RIBOSOMAL SUBUNIT PROTEIN BS16M"/>
    <property type="match status" value="1"/>
</dbReference>
<dbReference type="Pfam" id="PF00886">
    <property type="entry name" value="Ribosomal_S16"/>
    <property type="match status" value="1"/>
</dbReference>
<dbReference type="SUPFAM" id="SSF54565">
    <property type="entry name" value="Ribosomal protein S16"/>
    <property type="match status" value="1"/>
</dbReference>
<comment type="similarity">
    <text evidence="1">Belongs to the bacterial ribosomal protein bS16 family.</text>
</comment>
<sequence>MVTIRLARGGSKKRPFYHLTVTDSRNARDGRFVERIGFFNPVASGAEVKLSVDQERAAYWLGQGAQPSERVAHLLKEAAKATA</sequence>
<reference key="1">
    <citation type="journal article" date="2009" name="J. Bacteriol.">
        <title>Genome sequence of Azotobacter vinelandii, an obligate aerobe specialized to support diverse anaerobic metabolic processes.</title>
        <authorList>
            <person name="Setubal J.C."/>
            <person name="Dos Santos P."/>
            <person name="Goldman B.S."/>
            <person name="Ertesvaag H."/>
            <person name="Espin G."/>
            <person name="Rubio L.M."/>
            <person name="Valla S."/>
            <person name="Almeida N.F."/>
            <person name="Balasubramanian D."/>
            <person name="Cromes L."/>
            <person name="Curatti L."/>
            <person name="Du Z."/>
            <person name="Godsy E."/>
            <person name="Goodner B."/>
            <person name="Hellner-Burris K."/>
            <person name="Hernandez J.A."/>
            <person name="Houmiel K."/>
            <person name="Imperial J."/>
            <person name="Kennedy C."/>
            <person name="Larson T.J."/>
            <person name="Latreille P."/>
            <person name="Ligon L.S."/>
            <person name="Lu J."/>
            <person name="Maerk M."/>
            <person name="Miller N.M."/>
            <person name="Norton S."/>
            <person name="O'Carroll I.P."/>
            <person name="Paulsen I."/>
            <person name="Raulfs E.C."/>
            <person name="Roemer R."/>
            <person name="Rosser J."/>
            <person name="Segura D."/>
            <person name="Slater S."/>
            <person name="Stricklin S.L."/>
            <person name="Studholme D.J."/>
            <person name="Sun J."/>
            <person name="Viana C.J."/>
            <person name="Wallin E."/>
            <person name="Wang B."/>
            <person name="Wheeler C."/>
            <person name="Zhu H."/>
            <person name="Dean D.R."/>
            <person name="Dixon R."/>
            <person name="Wood D."/>
        </authorList>
    </citation>
    <scope>NUCLEOTIDE SEQUENCE [LARGE SCALE GENOMIC DNA]</scope>
    <source>
        <strain>DJ / ATCC BAA-1303</strain>
    </source>
</reference>
<evidence type="ECO:0000255" key="1">
    <source>
        <dbReference type="HAMAP-Rule" id="MF_00385"/>
    </source>
</evidence>
<evidence type="ECO:0000305" key="2"/>
<protein>
    <recommendedName>
        <fullName evidence="1">Small ribosomal subunit protein bS16</fullName>
    </recommendedName>
    <alternativeName>
        <fullName evidence="2">30S ribosomal protein S16</fullName>
    </alternativeName>
</protein>
<gene>
    <name evidence="1" type="primary">rpsP</name>
    <name type="ordered locus">Avin_39560</name>
</gene>
<feature type="chain" id="PRO_1000205748" description="Small ribosomal subunit protein bS16">
    <location>
        <begin position="1"/>
        <end position="83"/>
    </location>
</feature>